<feature type="chain" id="PRO_1000060992" description="Small ribosomal subunit protein uS19">
    <location>
        <begin position="1"/>
        <end position="92"/>
    </location>
</feature>
<reference key="1">
    <citation type="journal article" date="2008" name="J. Bacteriol.">
        <title>The pangenome structure of Escherichia coli: comparative genomic analysis of E. coli commensal and pathogenic isolates.</title>
        <authorList>
            <person name="Rasko D.A."/>
            <person name="Rosovitz M.J."/>
            <person name="Myers G.S.A."/>
            <person name="Mongodin E.F."/>
            <person name="Fricke W.F."/>
            <person name="Gajer P."/>
            <person name="Crabtree J."/>
            <person name="Sebaihia M."/>
            <person name="Thomson N.R."/>
            <person name="Chaudhuri R."/>
            <person name="Henderson I.R."/>
            <person name="Sperandio V."/>
            <person name="Ravel J."/>
        </authorList>
    </citation>
    <scope>NUCLEOTIDE SEQUENCE [LARGE SCALE GENOMIC DNA]</scope>
    <source>
        <strain>HS</strain>
    </source>
</reference>
<comment type="function">
    <text evidence="1">Protein S19 forms a complex with S13 that binds strongly to the 16S ribosomal RNA.</text>
</comment>
<comment type="similarity">
    <text evidence="1">Belongs to the universal ribosomal protein uS19 family.</text>
</comment>
<organism>
    <name type="scientific">Escherichia coli O9:H4 (strain HS)</name>
    <dbReference type="NCBI Taxonomy" id="331112"/>
    <lineage>
        <taxon>Bacteria</taxon>
        <taxon>Pseudomonadati</taxon>
        <taxon>Pseudomonadota</taxon>
        <taxon>Gammaproteobacteria</taxon>
        <taxon>Enterobacterales</taxon>
        <taxon>Enterobacteriaceae</taxon>
        <taxon>Escherichia</taxon>
    </lineage>
</organism>
<sequence>MPRSLKKGPFIDLHLLKKVEKAVESGDKKPLRTWSRRSTIFPNMIGLTIAVHNGRQHVPVFVTDEMVGHKLGEFAPTRTYRGHAADKKAKKK</sequence>
<keyword id="KW-0687">Ribonucleoprotein</keyword>
<keyword id="KW-0689">Ribosomal protein</keyword>
<keyword id="KW-0694">RNA-binding</keyword>
<keyword id="KW-0699">rRNA-binding</keyword>
<dbReference type="EMBL" id="CP000802">
    <property type="protein sequence ID" value="ABV07725.1"/>
    <property type="molecule type" value="Genomic_DNA"/>
</dbReference>
<dbReference type="RefSeq" id="WP_001138117.1">
    <property type="nucleotide sequence ID" value="NC_009800.1"/>
</dbReference>
<dbReference type="SMR" id="A8A5C1"/>
<dbReference type="GeneID" id="98390438"/>
<dbReference type="KEGG" id="ecx:EcHS_A3510"/>
<dbReference type="HOGENOM" id="CLU_144911_0_1_6"/>
<dbReference type="GO" id="GO:0005737">
    <property type="term" value="C:cytoplasm"/>
    <property type="evidence" value="ECO:0007669"/>
    <property type="project" value="UniProtKB-ARBA"/>
</dbReference>
<dbReference type="GO" id="GO:0015935">
    <property type="term" value="C:small ribosomal subunit"/>
    <property type="evidence" value="ECO:0007669"/>
    <property type="project" value="InterPro"/>
</dbReference>
<dbReference type="GO" id="GO:0019843">
    <property type="term" value="F:rRNA binding"/>
    <property type="evidence" value="ECO:0007669"/>
    <property type="project" value="UniProtKB-UniRule"/>
</dbReference>
<dbReference type="GO" id="GO:0003735">
    <property type="term" value="F:structural constituent of ribosome"/>
    <property type="evidence" value="ECO:0007669"/>
    <property type="project" value="InterPro"/>
</dbReference>
<dbReference type="GO" id="GO:0000028">
    <property type="term" value="P:ribosomal small subunit assembly"/>
    <property type="evidence" value="ECO:0007669"/>
    <property type="project" value="TreeGrafter"/>
</dbReference>
<dbReference type="GO" id="GO:0006412">
    <property type="term" value="P:translation"/>
    <property type="evidence" value="ECO:0007669"/>
    <property type="project" value="UniProtKB-UniRule"/>
</dbReference>
<dbReference type="FunFam" id="3.30.860.10:FF:000001">
    <property type="entry name" value="30S ribosomal protein S19"/>
    <property type="match status" value="1"/>
</dbReference>
<dbReference type="Gene3D" id="3.30.860.10">
    <property type="entry name" value="30s Ribosomal Protein S19, Chain A"/>
    <property type="match status" value="1"/>
</dbReference>
<dbReference type="HAMAP" id="MF_00531">
    <property type="entry name" value="Ribosomal_uS19"/>
    <property type="match status" value="1"/>
</dbReference>
<dbReference type="InterPro" id="IPR002222">
    <property type="entry name" value="Ribosomal_uS19"/>
</dbReference>
<dbReference type="InterPro" id="IPR005732">
    <property type="entry name" value="Ribosomal_uS19_bac-type"/>
</dbReference>
<dbReference type="InterPro" id="IPR020934">
    <property type="entry name" value="Ribosomal_uS19_CS"/>
</dbReference>
<dbReference type="InterPro" id="IPR023575">
    <property type="entry name" value="Ribosomal_uS19_SF"/>
</dbReference>
<dbReference type="NCBIfam" id="TIGR01050">
    <property type="entry name" value="rpsS_bact"/>
    <property type="match status" value="1"/>
</dbReference>
<dbReference type="PANTHER" id="PTHR11880">
    <property type="entry name" value="RIBOSOMAL PROTEIN S19P FAMILY MEMBER"/>
    <property type="match status" value="1"/>
</dbReference>
<dbReference type="PANTHER" id="PTHR11880:SF8">
    <property type="entry name" value="SMALL RIBOSOMAL SUBUNIT PROTEIN US19M"/>
    <property type="match status" value="1"/>
</dbReference>
<dbReference type="Pfam" id="PF00203">
    <property type="entry name" value="Ribosomal_S19"/>
    <property type="match status" value="1"/>
</dbReference>
<dbReference type="PIRSF" id="PIRSF002144">
    <property type="entry name" value="Ribosomal_S19"/>
    <property type="match status" value="1"/>
</dbReference>
<dbReference type="PRINTS" id="PR00975">
    <property type="entry name" value="RIBOSOMALS19"/>
</dbReference>
<dbReference type="SUPFAM" id="SSF54570">
    <property type="entry name" value="Ribosomal protein S19"/>
    <property type="match status" value="1"/>
</dbReference>
<dbReference type="PROSITE" id="PS00323">
    <property type="entry name" value="RIBOSOMAL_S19"/>
    <property type="match status" value="1"/>
</dbReference>
<protein>
    <recommendedName>
        <fullName evidence="1">Small ribosomal subunit protein uS19</fullName>
    </recommendedName>
    <alternativeName>
        <fullName evidence="2">30S ribosomal protein S19</fullName>
    </alternativeName>
</protein>
<accession>A8A5C1</accession>
<evidence type="ECO:0000255" key="1">
    <source>
        <dbReference type="HAMAP-Rule" id="MF_00531"/>
    </source>
</evidence>
<evidence type="ECO:0000305" key="2"/>
<proteinExistence type="inferred from homology"/>
<name>RS19_ECOHS</name>
<gene>
    <name evidence="1" type="primary">rpsS</name>
    <name type="ordered locus">EcHS_A3510</name>
</gene>